<reference key="1">
    <citation type="submission" date="2009-02" db="EMBL/GenBank/DDBJ databases">
        <title>The genome sequence of Ajellomyces capsulatus strain G186AR.</title>
        <authorList>
            <person name="Champion M."/>
            <person name="Cuomo C.A."/>
            <person name="Ma L.-J."/>
            <person name="Henn M.R."/>
            <person name="Sil A."/>
            <person name="Goldman B."/>
            <person name="Young S.K."/>
            <person name="Kodira C.D."/>
            <person name="Zeng Q."/>
            <person name="Koehrsen M."/>
            <person name="Alvarado L."/>
            <person name="Berlin A."/>
            <person name="Borenstein D."/>
            <person name="Chen Z."/>
            <person name="Engels R."/>
            <person name="Freedman E."/>
            <person name="Gellesch M."/>
            <person name="Goldberg J."/>
            <person name="Griggs A."/>
            <person name="Gujja S."/>
            <person name="Heiman D."/>
            <person name="Hepburn T."/>
            <person name="Howarth C."/>
            <person name="Jen D."/>
            <person name="Larson L."/>
            <person name="Lewis B."/>
            <person name="Mehta T."/>
            <person name="Park D."/>
            <person name="Pearson M."/>
            <person name="Roberts A."/>
            <person name="Saif S."/>
            <person name="Shea T."/>
            <person name="Shenoy N."/>
            <person name="Sisk P."/>
            <person name="Stolte C."/>
            <person name="Sykes S."/>
            <person name="Walk T."/>
            <person name="White J."/>
            <person name="Yandava C."/>
            <person name="Klein B."/>
            <person name="McEwen J.G."/>
            <person name="Puccia R."/>
            <person name="Goldman G.H."/>
            <person name="Felipe M.S."/>
            <person name="Nino-Vega G."/>
            <person name="San-Blas G."/>
            <person name="Taylor J."/>
            <person name="Mendoza L."/>
            <person name="Galagan J.E."/>
            <person name="Nusbaum C."/>
            <person name="Birren B.W."/>
        </authorList>
    </citation>
    <scope>NUCLEOTIDE SEQUENCE [LARGE SCALE GENOMIC DNA]</scope>
    <source>
        <strain>G186AR / H82 / ATCC MYA-2454 / RMSCC 2432</strain>
    </source>
</reference>
<protein>
    <recommendedName>
        <fullName evidence="1">Structure-specific endonuclease subunit SLX1</fullName>
        <ecNumber evidence="1">3.1.-.-</ecNumber>
    </recommendedName>
</protein>
<gene>
    <name evidence="1" type="primary">SLX1</name>
    <name type="ORF">HCBG_06508</name>
</gene>
<dbReference type="EC" id="3.1.-.-" evidence="1"/>
<dbReference type="EMBL" id="GG663371">
    <property type="protein sequence ID" value="EEH05389.1"/>
    <property type="molecule type" value="Genomic_DNA"/>
</dbReference>
<dbReference type="SMR" id="C0NTM8"/>
<dbReference type="FunCoup" id="C0NTM8">
    <property type="interactions" value="372"/>
</dbReference>
<dbReference type="STRING" id="447093.C0NTM8"/>
<dbReference type="VEuPathDB" id="FungiDB:I7I50_05572"/>
<dbReference type="HOGENOM" id="CLU_030739_1_0_1"/>
<dbReference type="InParanoid" id="C0NTM8"/>
<dbReference type="Proteomes" id="UP000001631">
    <property type="component" value="Unassembled WGS sequence"/>
</dbReference>
<dbReference type="GO" id="GO:0033557">
    <property type="term" value="C:Slx1-Slx4 complex"/>
    <property type="evidence" value="ECO:0007669"/>
    <property type="project" value="UniProtKB-UniRule"/>
</dbReference>
<dbReference type="GO" id="GO:0017108">
    <property type="term" value="F:5'-flap endonuclease activity"/>
    <property type="evidence" value="ECO:0007669"/>
    <property type="project" value="InterPro"/>
</dbReference>
<dbReference type="GO" id="GO:0008821">
    <property type="term" value="F:crossover junction DNA endonuclease activity"/>
    <property type="evidence" value="ECO:0007669"/>
    <property type="project" value="TreeGrafter"/>
</dbReference>
<dbReference type="GO" id="GO:0008270">
    <property type="term" value="F:zinc ion binding"/>
    <property type="evidence" value="ECO:0007669"/>
    <property type="project" value="UniProtKB-KW"/>
</dbReference>
<dbReference type="GO" id="GO:0000724">
    <property type="term" value="P:double-strand break repair via homologous recombination"/>
    <property type="evidence" value="ECO:0007669"/>
    <property type="project" value="TreeGrafter"/>
</dbReference>
<dbReference type="CDD" id="cd10455">
    <property type="entry name" value="GIY-YIG_SLX1"/>
    <property type="match status" value="1"/>
</dbReference>
<dbReference type="FunFam" id="3.40.1440.10:FF:000006">
    <property type="entry name" value="Structure-specific endonuclease subunit SLX1"/>
    <property type="match status" value="1"/>
</dbReference>
<dbReference type="Gene3D" id="3.40.1440.10">
    <property type="entry name" value="GIY-YIG endonuclease"/>
    <property type="match status" value="1"/>
</dbReference>
<dbReference type="Gene3D" id="3.30.40.10">
    <property type="entry name" value="Zinc/RING finger domain, C3HC4 (zinc finger)"/>
    <property type="match status" value="1"/>
</dbReference>
<dbReference type="HAMAP" id="MF_03100">
    <property type="entry name" value="Endonuc_su_Slx1"/>
    <property type="match status" value="1"/>
</dbReference>
<dbReference type="InterPro" id="IPR000305">
    <property type="entry name" value="GIY-YIG_endonuc"/>
</dbReference>
<dbReference type="InterPro" id="IPR035901">
    <property type="entry name" value="GIY-YIG_endonuc_sf"/>
</dbReference>
<dbReference type="InterPro" id="IPR027520">
    <property type="entry name" value="Slx1"/>
</dbReference>
<dbReference type="InterPro" id="IPR048749">
    <property type="entry name" value="SLX1_C"/>
</dbReference>
<dbReference type="InterPro" id="IPR050381">
    <property type="entry name" value="SLX1_endonuclease"/>
</dbReference>
<dbReference type="InterPro" id="IPR011011">
    <property type="entry name" value="Znf_FYVE_PHD"/>
</dbReference>
<dbReference type="InterPro" id="IPR013083">
    <property type="entry name" value="Znf_RING/FYVE/PHD"/>
</dbReference>
<dbReference type="PANTHER" id="PTHR20208">
    <property type="entry name" value="STRUCTURE-SPECIFIC ENDONUCLEASE SUBUNIT SLX1"/>
    <property type="match status" value="1"/>
</dbReference>
<dbReference type="PANTHER" id="PTHR20208:SF10">
    <property type="entry name" value="STRUCTURE-SPECIFIC ENDONUCLEASE SUBUNIT SLX1"/>
    <property type="match status" value="1"/>
</dbReference>
<dbReference type="Pfam" id="PF01541">
    <property type="entry name" value="GIY-YIG"/>
    <property type="match status" value="1"/>
</dbReference>
<dbReference type="Pfam" id="PF21202">
    <property type="entry name" value="SLX1_C"/>
    <property type="match status" value="1"/>
</dbReference>
<dbReference type="SUPFAM" id="SSF57903">
    <property type="entry name" value="FYVE/PHD zinc finger"/>
    <property type="match status" value="1"/>
</dbReference>
<dbReference type="PROSITE" id="PS50164">
    <property type="entry name" value="GIY_YIG"/>
    <property type="match status" value="1"/>
</dbReference>
<comment type="function">
    <text evidence="1">Catalytic subunit of the SLX1-SLX4 structure-specific endonuclease that resolves DNA secondary structures generated during DNA repair and recombination. Has endonuclease activity towards branched DNA substrates, introducing single-strand cuts in duplex DNA close to junctions with ss-DNA.</text>
</comment>
<comment type="cofactor">
    <cofactor evidence="1">
        <name>a divalent metal cation</name>
        <dbReference type="ChEBI" id="CHEBI:60240"/>
    </cofactor>
</comment>
<comment type="subunit">
    <text evidence="1">Forms a heterodimer with SLX4.</text>
</comment>
<comment type="subcellular location">
    <subcellularLocation>
        <location evidence="1">Nucleus</location>
    </subcellularLocation>
</comment>
<comment type="similarity">
    <text evidence="1">Belongs to the SLX1 family.</text>
</comment>
<accession>C0NTM8</accession>
<organism>
    <name type="scientific">Ajellomyces capsulatus (strain G186AR / H82 / ATCC MYA-2454 / RMSCC 2432)</name>
    <name type="common">Darling's disease fungus</name>
    <name type="synonym">Histoplasma capsulatum</name>
    <dbReference type="NCBI Taxonomy" id="447093"/>
    <lineage>
        <taxon>Eukaryota</taxon>
        <taxon>Fungi</taxon>
        <taxon>Dikarya</taxon>
        <taxon>Ascomycota</taxon>
        <taxon>Pezizomycotina</taxon>
        <taxon>Eurotiomycetes</taxon>
        <taxon>Eurotiomycetidae</taxon>
        <taxon>Onygenales</taxon>
        <taxon>Ajellomycetaceae</taxon>
        <taxon>Histoplasma</taxon>
    </lineage>
</organism>
<keyword id="KW-0227">DNA damage</keyword>
<keyword id="KW-0233">DNA recombination</keyword>
<keyword id="KW-0234">DNA repair</keyword>
<keyword id="KW-0255">Endonuclease</keyword>
<keyword id="KW-0378">Hydrolase</keyword>
<keyword id="KW-0479">Metal-binding</keyword>
<keyword id="KW-0540">Nuclease</keyword>
<keyword id="KW-0539">Nucleus</keyword>
<keyword id="KW-1185">Reference proteome</keyword>
<keyword id="KW-0862">Zinc</keyword>
<keyword id="KW-0863">Zinc-finger</keyword>
<proteinExistence type="inferred from homology"/>
<sequence>MDNIPQSINPIPAFYCCYLLRSTVRHASLYIGSTPEPSRRLAQHNGDRTGGARKTSSEKLRPWEMVAIVSGFTNRAGALQFEWAWQHTKESRHAEVERCESEQLGTRGSSRTGKEVKRAGKPRTSLPNILENLHILLRSPYFSEWPLEVWFFSADVWQVWSQPKGNLLDNSIKVVTAFSSKEAGDTNRREILGKRIETLDTGYDALIEYVEKSQFLLESEEAIDCGVCKQRLNPRNDMIAICSHSLCRCASHLLCLSAHFLEAAGFIGKLIPKEGTCPACLGKLEWPTLMKEITLRLRGQEEVKRLLGRRRRTEQVGKRKISNHVSSEKGESEASMPSTDAKTMALPIRSHPSVGGSNFGKLGRSVGSAIRTNTDNGSVKAVTPEIEFYRRRKCNAKKNFSGLYSTPRINISDWDNAEIIE</sequence>
<evidence type="ECO:0000255" key="1">
    <source>
        <dbReference type="HAMAP-Rule" id="MF_03100"/>
    </source>
</evidence>
<evidence type="ECO:0000256" key="2">
    <source>
        <dbReference type="SAM" id="MobiDB-lite"/>
    </source>
</evidence>
<name>SLX1_AJECG</name>
<feature type="chain" id="PRO_0000383770" description="Structure-specific endonuclease subunit SLX1">
    <location>
        <begin position="1"/>
        <end position="421"/>
    </location>
</feature>
<feature type="domain" description="GIY-YIG" evidence="1">
    <location>
        <begin position="13"/>
        <end position="95"/>
    </location>
</feature>
<feature type="zinc finger region" description="SLX1-type" evidence="1">
    <location>
        <begin position="225"/>
        <end position="280"/>
    </location>
</feature>
<feature type="region of interest" description="Disordered" evidence="2">
    <location>
        <begin position="34"/>
        <end position="57"/>
    </location>
</feature>
<feature type="region of interest" description="Disordered" evidence="2">
    <location>
        <begin position="96"/>
        <end position="120"/>
    </location>
</feature>
<feature type="region of interest" description="Disordered" evidence="2">
    <location>
        <begin position="310"/>
        <end position="339"/>
    </location>
</feature>
<feature type="compositionally biased region" description="Basic residues" evidence="2">
    <location>
        <begin position="310"/>
        <end position="322"/>
    </location>
</feature>